<reference key="1">
    <citation type="journal article" date="2003" name="J. Bacteriol.">
        <title>Comparative analyses of the complete genome sequences of Pierce's disease and citrus variegated chlorosis strains of Xylella fastidiosa.</title>
        <authorList>
            <person name="Van Sluys M.A."/>
            <person name="de Oliveira M.C."/>
            <person name="Monteiro-Vitorello C.B."/>
            <person name="Miyaki C.Y."/>
            <person name="Furlan L.R."/>
            <person name="Camargo L.E.A."/>
            <person name="da Silva A.C.R."/>
            <person name="Moon D.H."/>
            <person name="Takita M.A."/>
            <person name="Lemos E.G.M."/>
            <person name="Machado M.A."/>
            <person name="Ferro M.I.T."/>
            <person name="da Silva F.R."/>
            <person name="Goldman M.H.S."/>
            <person name="Goldman G.H."/>
            <person name="Lemos M.V.F."/>
            <person name="El-Dorry H."/>
            <person name="Tsai S.M."/>
            <person name="Carrer H."/>
            <person name="Carraro D.M."/>
            <person name="de Oliveira R.C."/>
            <person name="Nunes L.R."/>
            <person name="Siqueira W.J."/>
            <person name="Coutinho L.L."/>
            <person name="Kimura E.T."/>
            <person name="Ferro E.S."/>
            <person name="Harakava R."/>
            <person name="Kuramae E.E."/>
            <person name="Marino C.L."/>
            <person name="Giglioti E."/>
            <person name="Abreu I.L."/>
            <person name="Alves L.M.C."/>
            <person name="do Amaral A.M."/>
            <person name="Baia G.S."/>
            <person name="Blanco S.R."/>
            <person name="Brito M.S."/>
            <person name="Cannavan F.S."/>
            <person name="Celestino A.V."/>
            <person name="da Cunha A.F."/>
            <person name="Fenille R.C."/>
            <person name="Ferro J.A."/>
            <person name="Formighieri E.F."/>
            <person name="Kishi L.T."/>
            <person name="Leoni S.G."/>
            <person name="Oliveira A.R."/>
            <person name="Rosa V.E. Jr."/>
            <person name="Sassaki F.T."/>
            <person name="Sena J.A.D."/>
            <person name="de Souza A.A."/>
            <person name="Truffi D."/>
            <person name="Tsukumo F."/>
            <person name="Yanai G.M."/>
            <person name="Zaros L.G."/>
            <person name="Civerolo E.L."/>
            <person name="Simpson A.J.G."/>
            <person name="Almeida N.F. Jr."/>
            <person name="Setubal J.C."/>
            <person name="Kitajima J.P."/>
        </authorList>
    </citation>
    <scope>NUCLEOTIDE SEQUENCE [LARGE SCALE GENOMIC DNA]</scope>
    <source>
        <strain>Temecula1 / ATCC 700964</strain>
    </source>
</reference>
<gene>
    <name evidence="1" type="primary">tig</name>
    <name type="ordered locus">PD_0471</name>
</gene>
<evidence type="ECO:0000255" key="1">
    <source>
        <dbReference type="HAMAP-Rule" id="MF_00303"/>
    </source>
</evidence>
<comment type="function">
    <text evidence="1">Involved in protein export. Acts as a chaperone by maintaining the newly synthesized protein in an open conformation. Functions as a peptidyl-prolyl cis-trans isomerase.</text>
</comment>
<comment type="catalytic activity">
    <reaction evidence="1">
        <text>[protein]-peptidylproline (omega=180) = [protein]-peptidylproline (omega=0)</text>
        <dbReference type="Rhea" id="RHEA:16237"/>
        <dbReference type="Rhea" id="RHEA-COMP:10747"/>
        <dbReference type="Rhea" id="RHEA-COMP:10748"/>
        <dbReference type="ChEBI" id="CHEBI:83833"/>
        <dbReference type="ChEBI" id="CHEBI:83834"/>
        <dbReference type="EC" id="5.2.1.8"/>
    </reaction>
</comment>
<comment type="subcellular location">
    <subcellularLocation>
        <location>Cytoplasm</location>
    </subcellularLocation>
    <text evidence="1">About half TF is bound to the ribosome near the polypeptide exit tunnel while the other half is free in the cytoplasm.</text>
</comment>
<comment type="domain">
    <text evidence="1">Consists of 3 domains; the N-terminus binds the ribosome, the middle domain has PPIase activity, while the C-terminus has intrinsic chaperone activity on its own.</text>
</comment>
<comment type="similarity">
    <text evidence="1">Belongs to the FKBP-type PPIase family. Tig subfamily.</text>
</comment>
<keyword id="KW-0131">Cell cycle</keyword>
<keyword id="KW-0132">Cell division</keyword>
<keyword id="KW-0143">Chaperone</keyword>
<keyword id="KW-0963">Cytoplasm</keyword>
<keyword id="KW-0413">Isomerase</keyword>
<keyword id="KW-1185">Reference proteome</keyword>
<keyword id="KW-0697">Rotamase</keyword>
<dbReference type="EC" id="5.2.1.8" evidence="1"/>
<dbReference type="EMBL" id="AE009442">
    <property type="protein sequence ID" value="AAO28348.1"/>
    <property type="molecule type" value="Genomic_DNA"/>
</dbReference>
<dbReference type="RefSeq" id="WP_004090161.1">
    <property type="nucleotide sequence ID" value="NC_004556.1"/>
</dbReference>
<dbReference type="SMR" id="Q87E52"/>
<dbReference type="GeneID" id="93904174"/>
<dbReference type="KEGG" id="xft:PD_0471"/>
<dbReference type="HOGENOM" id="CLU_033058_2_0_6"/>
<dbReference type="Proteomes" id="UP000002516">
    <property type="component" value="Chromosome"/>
</dbReference>
<dbReference type="GO" id="GO:0005737">
    <property type="term" value="C:cytoplasm"/>
    <property type="evidence" value="ECO:0007669"/>
    <property type="project" value="UniProtKB-SubCell"/>
</dbReference>
<dbReference type="GO" id="GO:0003755">
    <property type="term" value="F:peptidyl-prolyl cis-trans isomerase activity"/>
    <property type="evidence" value="ECO:0007669"/>
    <property type="project" value="UniProtKB-UniRule"/>
</dbReference>
<dbReference type="GO" id="GO:0044183">
    <property type="term" value="F:protein folding chaperone"/>
    <property type="evidence" value="ECO:0007669"/>
    <property type="project" value="TreeGrafter"/>
</dbReference>
<dbReference type="GO" id="GO:0043022">
    <property type="term" value="F:ribosome binding"/>
    <property type="evidence" value="ECO:0007669"/>
    <property type="project" value="TreeGrafter"/>
</dbReference>
<dbReference type="GO" id="GO:0051083">
    <property type="term" value="P:'de novo' cotranslational protein folding"/>
    <property type="evidence" value="ECO:0007669"/>
    <property type="project" value="TreeGrafter"/>
</dbReference>
<dbReference type="GO" id="GO:0051301">
    <property type="term" value="P:cell division"/>
    <property type="evidence" value="ECO:0007669"/>
    <property type="project" value="UniProtKB-KW"/>
</dbReference>
<dbReference type="GO" id="GO:0061077">
    <property type="term" value="P:chaperone-mediated protein folding"/>
    <property type="evidence" value="ECO:0007669"/>
    <property type="project" value="TreeGrafter"/>
</dbReference>
<dbReference type="GO" id="GO:0015031">
    <property type="term" value="P:protein transport"/>
    <property type="evidence" value="ECO:0007669"/>
    <property type="project" value="UniProtKB-UniRule"/>
</dbReference>
<dbReference type="GO" id="GO:0043335">
    <property type="term" value="P:protein unfolding"/>
    <property type="evidence" value="ECO:0007669"/>
    <property type="project" value="TreeGrafter"/>
</dbReference>
<dbReference type="Gene3D" id="3.10.50.40">
    <property type="match status" value="1"/>
</dbReference>
<dbReference type="Gene3D" id="3.30.70.1050">
    <property type="entry name" value="Trigger factor ribosome-binding domain"/>
    <property type="match status" value="1"/>
</dbReference>
<dbReference type="Gene3D" id="1.10.3120.10">
    <property type="entry name" value="Trigger factor, C-terminal domain"/>
    <property type="match status" value="1"/>
</dbReference>
<dbReference type="HAMAP" id="MF_00303">
    <property type="entry name" value="Trigger_factor_Tig"/>
    <property type="match status" value="1"/>
</dbReference>
<dbReference type="InterPro" id="IPR046357">
    <property type="entry name" value="PPIase_dom_sf"/>
</dbReference>
<dbReference type="InterPro" id="IPR005215">
    <property type="entry name" value="Trig_fac"/>
</dbReference>
<dbReference type="InterPro" id="IPR008880">
    <property type="entry name" value="Trigger_fac_C"/>
</dbReference>
<dbReference type="InterPro" id="IPR037041">
    <property type="entry name" value="Trigger_fac_C_sf"/>
</dbReference>
<dbReference type="InterPro" id="IPR008881">
    <property type="entry name" value="Trigger_fac_ribosome-bd_bac"/>
</dbReference>
<dbReference type="InterPro" id="IPR036611">
    <property type="entry name" value="Trigger_fac_ribosome-bd_sf"/>
</dbReference>
<dbReference type="InterPro" id="IPR027304">
    <property type="entry name" value="Trigger_fact/SurA_dom_sf"/>
</dbReference>
<dbReference type="NCBIfam" id="TIGR00115">
    <property type="entry name" value="tig"/>
    <property type="match status" value="1"/>
</dbReference>
<dbReference type="PANTHER" id="PTHR30560">
    <property type="entry name" value="TRIGGER FACTOR CHAPERONE AND PEPTIDYL-PROLYL CIS/TRANS ISOMERASE"/>
    <property type="match status" value="1"/>
</dbReference>
<dbReference type="PANTHER" id="PTHR30560:SF3">
    <property type="entry name" value="TRIGGER FACTOR-LIKE PROTEIN TIG, CHLOROPLASTIC"/>
    <property type="match status" value="1"/>
</dbReference>
<dbReference type="Pfam" id="PF05698">
    <property type="entry name" value="Trigger_C"/>
    <property type="match status" value="1"/>
</dbReference>
<dbReference type="Pfam" id="PF05697">
    <property type="entry name" value="Trigger_N"/>
    <property type="match status" value="1"/>
</dbReference>
<dbReference type="PIRSF" id="PIRSF003095">
    <property type="entry name" value="Trigger_factor"/>
    <property type="match status" value="1"/>
</dbReference>
<dbReference type="SUPFAM" id="SSF54534">
    <property type="entry name" value="FKBP-like"/>
    <property type="match status" value="1"/>
</dbReference>
<dbReference type="SUPFAM" id="SSF109998">
    <property type="entry name" value="Triger factor/SurA peptide-binding domain-like"/>
    <property type="match status" value="1"/>
</dbReference>
<dbReference type="SUPFAM" id="SSF102735">
    <property type="entry name" value="Trigger factor ribosome-binding domain"/>
    <property type="match status" value="1"/>
</dbReference>
<feature type="chain" id="PRO_0000179469" description="Trigger factor">
    <location>
        <begin position="1"/>
        <end position="431"/>
    </location>
</feature>
<feature type="domain" description="PPIase FKBP-type" evidence="1">
    <location>
        <begin position="158"/>
        <end position="243"/>
    </location>
</feature>
<protein>
    <recommendedName>
        <fullName evidence="1">Trigger factor</fullName>
        <shortName evidence="1">TF</shortName>
        <ecNumber evidence="1">5.2.1.8</ecNumber>
    </recommendedName>
    <alternativeName>
        <fullName evidence="1">PPIase</fullName>
    </alternativeName>
</protein>
<sequence length="431" mass="48472">MPVLIESIGNLERRLTFSVPEDRLESHVDERLREIARAARINGFRAGKVPAKVIEQRFGEKVRAEVLDSLLRETLDSAIRAHSLRLAGAARIDHANEGGLNFVATFEVVPDFGEIDVSKLGVVRRTAKVTDVDIDQMIENLRLQRRTWRVAEHGAQVGYLVALETWSQAGDERLPIEGVEAGSTILGSGVMFEQIERGLEGLSKGDENVLDVTFPDDWRVMQLAGKAVQVHVKVIEVSEPVLLEVNEEFIKSFGVKSGKLEDFRADIRANLERELKGALVSHLRREIGEQLIAAYAHVEMPPRLVEKEARLMLAKQIEQIRLSGRDPTVIPDDAHIGFMDAACKRVLVGLLVGEIAGRNRLRLDPMRVTETLHLIASTYEEPEEVFQMYRNDPKLMEGVQSLVMEEQVIEWIADRAQKTEQVLSFQEAIQQ</sequence>
<accession>Q87E52</accession>
<proteinExistence type="inferred from homology"/>
<name>TIG_XYLFT</name>
<organism>
    <name type="scientific">Xylella fastidiosa (strain Temecula1 / ATCC 700964)</name>
    <dbReference type="NCBI Taxonomy" id="183190"/>
    <lineage>
        <taxon>Bacteria</taxon>
        <taxon>Pseudomonadati</taxon>
        <taxon>Pseudomonadota</taxon>
        <taxon>Gammaproteobacteria</taxon>
        <taxon>Lysobacterales</taxon>
        <taxon>Lysobacteraceae</taxon>
        <taxon>Xylella</taxon>
    </lineage>
</organism>